<sequence>MRSKYIVIEGLEGAGKTTARNVVVETLEQLGIRDMVFTREPGGTQLAEKLRSLVLDIKSVGDEVITDKAEVLMFYAARVQLVETVIKPALANGTWVIGDRHDLSTQAYQGGGRGIDQHMLATLRDAVLGDFRPDLTLYLDVTPEVGLKRARARGELDRIEQESFDFFNRTRARYLELAAQDKSIHTIDATQPLEAVMDAIRTTVTHWVKELDA</sequence>
<organism>
    <name type="scientific">Shigella boydii serotype 4 (strain Sb227)</name>
    <dbReference type="NCBI Taxonomy" id="300268"/>
    <lineage>
        <taxon>Bacteria</taxon>
        <taxon>Pseudomonadati</taxon>
        <taxon>Pseudomonadota</taxon>
        <taxon>Gammaproteobacteria</taxon>
        <taxon>Enterobacterales</taxon>
        <taxon>Enterobacteriaceae</taxon>
        <taxon>Shigella</taxon>
    </lineage>
</organism>
<protein>
    <recommendedName>
        <fullName evidence="1">Thymidylate kinase</fullName>
        <ecNumber evidence="1">2.7.4.9</ecNumber>
    </recommendedName>
    <alternativeName>
        <fullName evidence="1">dTMP kinase</fullName>
    </alternativeName>
</protein>
<evidence type="ECO:0000255" key="1">
    <source>
        <dbReference type="HAMAP-Rule" id="MF_00165"/>
    </source>
</evidence>
<dbReference type="EC" id="2.7.4.9" evidence="1"/>
<dbReference type="EMBL" id="CP000036">
    <property type="protein sequence ID" value="ABB66555.1"/>
    <property type="molecule type" value="Genomic_DNA"/>
</dbReference>
<dbReference type="RefSeq" id="WP_001257000.1">
    <property type="nucleotide sequence ID" value="NC_007613.1"/>
</dbReference>
<dbReference type="SMR" id="Q31ZF3"/>
<dbReference type="GeneID" id="93776310"/>
<dbReference type="KEGG" id="sbo:SBO_1965"/>
<dbReference type="HOGENOM" id="CLU_049131_0_1_6"/>
<dbReference type="Proteomes" id="UP000007067">
    <property type="component" value="Chromosome"/>
</dbReference>
<dbReference type="GO" id="GO:0005829">
    <property type="term" value="C:cytosol"/>
    <property type="evidence" value="ECO:0007669"/>
    <property type="project" value="TreeGrafter"/>
</dbReference>
<dbReference type="GO" id="GO:0005524">
    <property type="term" value="F:ATP binding"/>
    <property type="evidence" value="ECO:0007669"/>
    <property type="project" value="UniProtKB-UniRule"/>
</dbReference>
<dbReference type="GO" id="GO:0004798">
    <property type="term" value="F:dTMP kinase activity"/>
    <property type="evidence" value="ECO:0007669"/>
    <property type="project" value="UniProtKB-UniRule"/>
</dbReference>
<dbReference type="GO" id="GO:0006233">
    <property type="term" value="P:dTDP biosynthetic process"/>
    <property type="evidence" value="ECO:0007669"/>
    <property type="project" value="InterPro"/>
</dbReference>
<dbReference type="GO" id="GO:0006235">
    <property type="term" value="P:dTTP biosynthetic process"/>
    <property type="evidence" value="ECO:0007669"/>
    <property type="project" value="UniProtKB-UniRule"/>
</dbReference>
<dbReference type="GO" id="GO:0006227">
    <property type="term" value="P:dUDP biosynthetic process"/>
    <property type="evidence" value="ECO:0007669"/>
    <property type="project" value="TreeGrafter"/>
</dbReference>
<dbReference type="CDD" id="cd01672">
    <property type="entry name" value="TMPK"/>
    <property type="match status" value="1"/>
</dbReference>
<dbReference type="FunFam" id="3.40.50.300:FF:000321">
    <property type="entry name" value="Thymidylate kinase"/>
    <property type="match status" value="1"/>
</dbReference>
<dbReference type="Gene3D" id="3.40.50.300">
    <property type="entry name" value="P-loop containing nucleotide triphosphate hydrolases"/>
    <property type="match status" value="1"/>
</dbReference>
<dbReference type="HAMAP" id="MF_00165">
    <property type="entry name" value="Thymidylate_kinase"/>
    <property type="match status" value="1"/>
</dbReference>
<dbReference type="InterPro" id="IPR027417">
    <property type="entry name" value="P-loop_NTPase"/>
</dbReference>
<dbReference type="InterPro" id="IPR039430">
    <property type="entry name" value="Thymidylate_kin-like_dom"/>
</dbReference>
<dbReference type="InterPro" id="IPR018095">
    <property type="entry name" value="Thymidylate_kin_CS"/>
</dbReference>
<dbReference type="InterPro" id="IPR018094">
    <property type="entry name" value="Thymidylate_kinase"/>
</dbReference>
<dbReference type="NCBIfam" id="TIGR00041">
    <property type="entry name" value="DTMP_kinase"/>
    <property type="match status" value="1"/>
</dbReference>
<dbReference type="PANTHER" id="PTHR10344">
    <property type="entry name" value="THYMIDYLATE KINASE"/>
    <property type="match status" value="1"/>
</dbReference>
<dbReference type="PANTHER" id="PTHR10344:SF4">
    <property type="entry name" value="UMP-CMP KINASE 2, MITOCHONDRIAL"/>
    <property type="match status" value="1"/>
</dbReference>
<dbReference type="Pfam" id="PF02223">
    <property type="entry name" value="Thymidylate_kin"/>
    <property type="match status" value="1"/>
</dbReference>
<dbReference type="SUPFAM" id="SSF52540">
    <property type="entry name" value="P-loop containing nucleoside triphosphate hydrolases"/>
    <property type="match status" value="1"/>
</dbReference>
<dbReference type="PROSITE" id="PS01331">
    <property type="entry name" value="THYMIDYLATE_KINASE"/>
    <property type="match status" value="1"/>
</dbReference>
<name>KTHY_SHIBS</name>
<feature type="chain" id="PRO_1000023281" description="Thymidylate kinase">
    <location>
        <begin position="1"/>
        <end position="213"/>
    </location>
</feature>
<feature type="binding site" evidence="1">
    <location>
        <begin position="10"/>
        <end position="17"/>
    </location>
    <ligand>
        <name>ATP</name>
        <dbReference type="ChEBI" id="CHEBI:30616"/>
    </ligand>
</feature>
<comment type="function">
    <text evidence="1">Phosphorylation of dTMP to form dTDP in both de novo and salvage pathways of dTTP synthesis.</text>
</comment>
<comment type="catalytic activity">
    <reaction evidence="1">
        <text>dTMP + ATP = dTDP + ADP</text>
        <dbReference type="Rhea" id="RHEA:13517"/>
        <dbReference type="ChEBI" id="CHEBI:30616"/>
        <dbReference type="ChEBI" id="CHEBI:58369"/>
        <dbReference type="ChEBI" id="CHEBI:63528"/>
        <dbReference type="ChEBI" id="CHEBI:456216"/>
        <dbReference type="EC" id="2.7.4.9"/>
    </reaction>
</comment>
<comment type="similarity">
    <text evidence="1">Belongs to the thymidylate kinase family.</text>
</comment>
<proteinExistence type="inferred from homology"/>
<keyword id="KW-0067">ATP-binding</keyword>
<keyword id="KW-0418">Kinase</keyword>
<keyword id="KW-0545">Nucleotide biosynthesis</keyword>
<keyword id="KW-0547">Nucleotide-binding</keyword>
<keyword id="KW-0808">Transferase</keyword>
<accession>Q31ZF3</accession>
<gene>
    <name evidence="1" type="primary">tmk</name>
    <name type="ordered locus">SBO_1965</name>
</gene>
<reference key="1">
    <citation type="journal article" date="2005" name="Nucleic Acids Res.">
        <title>Genome dynamics and diversity of Shigella species, the etiologic agents of bacillary dysentery.</title>
        <authorList>
            <person name="Yang F."/>
            <person name="Yang J."/>
            <person name="Zhang X."/>
            <person name="Chen L."/>
            <person name="Jiang Y."/>
            <person name="Yan Y."/>
            <person name="Tang X."/>
            <person name="Wang J."/>
            <person name="Xiong Z."/>
            <person name="Dong J."/>
            <person name="Xue Y."/>
            <person name="Zhu Y."/>
            <person name="Xu X."/>
            <person name="Sun L."/>
            <person name="Chen S."/>
            <person name="Nie H."/>
            <person name="Peng J."/>
            <person name="Xu J."/>
            <person name="Wang Y."/>
            <person name="Yuan Z."/>
            <person name="Wen Y."/>
            <person name="Yao Z."/>
            <person name="Shen Y."/>
            <person name="Qiang B."/>
            <person name="Hou Y."/>
            <person name="Yu J."/>
            <person name="Jin Q."/>
        </authorList>
    </citation>
    <scope>NUCLEOTIDE SEQUENCE [LARGE SCALE GENOMIC DNA]</scope>
    <source>
        <strain>Sb227</strain>
    </source>
</reference>